<feature type="chain" id="PRO_0000310238" description="ATP-dependent RNA helicase DBP8">
    <location>
        <begin position="1"/>
        <end position="431"/>
    </location>
</feature>
<feature type="domain" description="Helicase ATP-binding" evidence="2">
    <location>
        <begin position="33"/>
        <end position="209"/>
    </location>
</feature>
<feature type="domain" description="Helicase C-terminal" evidence="3">
    <location>
        <begin position="242"/>
        <end position="389"/>
    </location>
</feature>
<feature type="region of interest" description="Disordered" evidence="4">
    <location>
        <begin position="404"/>
        <end position="431"/>
    </location>
</feature>
<feature type="short sequence motif" description="Q motif">
    <location>
        <begin position="2"/>
        <end position="30"/>
    </location>
</feature>
<feature type="short sequence motif" description="DEAD box">
    <location>
        <begin position="155"/>
        <end position="158"/>
    </location>
</feature>
<feature type="compositionally biased region" description="Basic and acidic residues" evidence="4">
    <location>
        <begin position="411"/>
        <end position="431"/>
    </location>
</feature>
<feature type="binding site" evidence="2">
    <location>
        <begin position="46"/>
        <end position="53"/>
    </location>
    <ligand>
        <name>ATP</name>
        <dbReference type="ChEBI" id="CHEBI:30616"/>
    </ligand>
</feature>
<evidence type="ECO:0000250" key="1"/>
<evidence type="ECO:0000255" key="2">
    <source>
        <dbReference type="PROSITE-ProRule" id="PRU00541"/>
    </source>
</evidence>
<evidence type="ECO:0000255" key="3">
    <source>
        <dbReference type="PROSITE-ProRule" id="PRU00542"/>
    </source>
</evidence>
<evidence type="ECO:0000256" key="4">
    <source>
        <dbReference type="SAM" id="MobiDB-lite"/>
    </source>
</evidence>
<evidence type="ECO:0000305" key="5"/>
<keyword id="KW-0067">ATP-binding</keyword>
<keyword id="KW-0347">Helicase</keyword>
<keyword id="KW-0378">Hydrolase</keyword>
<keyword id="KW-0547">Nucleotide-binding</keyword>
<keyword id="KW-0539">Nucleus</keyword>
<keyword id="KW-0690">Ribosome biogenesis</keyword>
<keyword id="KW-0694">RNA-binding</keyword>
<keyword id="KW-0698">rRNA processing</keyword>
<protein>
    <recommendedName>
        <fullName>ATP-dependent RNA helicase DBP8</fullName>
        <ecNumber>3.6.4.13</ecNumber>
    </recommendedName>
    <alternativeName>
        <fullName>DEAD box protein 8</fullName>
    </alternativeName>
</protein>
<organism>
    <name type="scientific">Saccharomyces cerevisiae (strain YJM789)</name>
    <name type="common">Baker's yeast</name>
    <dbReference type="NCBI Taxonomy" id="307796"/>
    <lineage>
        <taxon>Eukaryota</taxon>
        <taxon>Fungi</taxon>
        <taxon>Dikarya</taxon>
        <taxon>Ascomycota</taxon>
        <taxon>Saccharomycotina</taxon>
        <taxon>Saccharomycetes</taxon>
        <taxon>Saccharomycetales</taxon>
        <taxon>Saccharomycetaceae</taxon>
        <taxon>Saccharomyces</taxon>
    </lineage>
</organism>
<reference key="1">
    <citation type="journal article" date="2007" name="Proc. Natl. Acad. Sci. U.S.A.">
        <title>Genome sequencing and comparative analysis of Saccharomyces cerevisiae strain YJM789.</title>
        <authorList>
            <person name="Wei W."/>
            <person name="McCusker J.H."/>
            <person name="Hyman R.W."/>
            <person name="Jones T."/>
            <person name="Ning Y."/>
            <person name="Cao Z."/>
            <person name="Gu Z."/>
            <person name="Bruno D."/>
            <person name="Miranda M."/>
            <person name="Nguyen M."/>
            <person name="Wilhelmy J."/>
            <person name="Komp C."/>
            <person name="Tamse R."/>
            <person name="Wang X."/>
            <person name="Jia P."/>
            <person name="Luedi P."/>
            <person name="Oefner P.J."/>
            <person name="David L."/>
            <person name="Dietrich F.S."/>
            <person name="Li Y."/>
            <person name="Davis R.W."/>
            <person name="Steinmetz L.M."/>
        </authorList>
    </citation>
    <scope>NUCLEOTIDE SEQUENCE [LARGE SCALE GENOMIC DNA]</scope>
    <source>
        <strain>YJM789</strain>
    </source>
</reference>
<accession>A6ZT77</accession>
<name>DBP8_YEAS7</name>
<dbReference type="EC" id="3.6.4.13"/>
<dbReference type="EMBL" id="AAFW02000082">
    <property type="protein sequence ID" value="EDN62408.1"/>
    <property type="molecule type" value="Genomic_DNA"/>
</dbReference>
<dbReference type="SMR" id="A6ZT77"/>
<dbReference type="HOGENOM" id="CLU_003041_1_1_1"/>
<dbReference type="Proteomes" id="UP000007060">
    <property type="component" value="Unassembled WGS sequence"/>
</dbReference>
<dbReference type="GO" id="GO:0005829">
    <property type="term" value="C:cytosol"/>
    <property type="evidence" value="ECO:0007669"/>
    <property type="project" value="TreeGrafter"/>
</dbReference>
<dbReference type="GO" id="GO:0005730">
    <property type="term" value="C:nucleolus"/>
    <property type="evidence" value="ECO:0007669"/>
    <property type="project" value="UniProtKB-SubCell"/>
</dbReference>
<dbReference type="GO" id="GO:0005524">
    <property type="term" value="F:ATP binding"/>
    <property type="evidence" value="ECO:0007669"/>
    <property type="project" value="UniProtKB-KW"/>
</dbReference>
<dbReference type="GO" id="GO:0016887">
    <property type="term" value="F:ATP hydrolysis activity"/>
    <property type="evidence" value="ECO:0007669"/>
    <property type="project" value="RHEA"/>
</dbReference>
<dbReference type="GO" id="GO:0003723">
    <property type="term" value="F:RNA binding"/>
    <property type="evidence" value="ECO:0007669"/>
    <property type="project" value="UniProtKB-KW"/>
</dbReference>
<dbReference type="GO" id="GO:0003724">
    <property type="term" value="F:RNA helicase activity"/>
    <property type="evidence" value="ECO:0007669"/>
    <property type="project" value="UniProtKB-EC"/>
</dbReference>
<dbReference type="GO" id="GO:0006364">
    <property type="term" value="P:rRNA processing"/>
    <property type="evidence" value="ECO:0007669"/>
    <property type="project" value="UniProtKB-KW"/>
</dbReference>
<dbReference type="CDD" id="cd17955">
    <property type="entry name" value="DEADc_DDX49"/>
    <property type="match status" value="1"/>
</dbReference>
<dbReference type="CDD" id="cd18787">
    <property type="entry name" value="SF2_C_DEAD"/>
    <property type="match status" value="1"/>
</dbReference>
<dbReference type="FunFam" id="3.40.50.300:FF:000892">
    <property type="entry name" value="probable ATP-dependent RNA helicase DDX49"/>
    <property type="match status" value="1"/>
</dbReference>
<dbReference type="FunFam" id="3.40.50.300:FF:000993">
    <property type="entry name" value="probable ATP-dependent RNA helicase DDX49"/>
    <property type="match status" value="1"/>
</dbReference>
<dbReference type="Gene3D" id="3.40.50.300">
    <property type="entry name" value="P-loop containing nucleotide triphosphate hydrolases"/>
    <property type="match status" value="2"/>
</dbReference>
<dbReference type="InterPro" id="IPR011545">
    <property type="entry name" value="DEAD/DEAH_box_helicase_dom"/>
</dbReference>
<dbReference type="InterPro" id="IPR050079">
    <property type="entry name" value="DEAD_box_RNA_helicase"/>
</dbReference>
<dbReference type="InterPro" id="IPR014001">
    <property type="entry name" value="Helicase_ATP-bd"/>
</dbReference>
<dbReference type="InterPro" id="IPR001650">
    <property type="entry name" value="Helicase_C-like"/>
</dbReference>
<dbReference type="InterPro" id="IPR027417">
    <property type="entry name" value="P-loop_NTPase"/>
</dbReference>
<dbReference type="InterPro" id="IPR014014">
    <property type="entry name" value="RNA_helicase_DEAD_Q_motif"/>
</dbReference>
<dbReference type="PANTHER" id="PTHR47959:SF24">
    <property type="entry name" value="ATP-DEPENDENT RNA HELICASE"/>
    <property type="match status" value="1"/>
</dbReference>
<dbReference type="PANTHER" id="PTHR47959">
    <property type="entry name" value="ATP-DEPENDENT RNA HELICASE RHLE-RELATED"/>
    <property type="match status" value="1"/>
</dbReference>
<dbReference type="Pfam" id="PF00270">
    <property type="entry name" value="DEAD"/>
    <property type="match status" value="1"/>
</dbReference>
<dbReference type="Pfam" id="PF00271">
    <property type="entry name" value="Helicase_C"/>
    <property type="match status" value="1"/>
</dbReference>
<dbReference type="SMART" id="SM00487">
    <property type="entry name" value="DEXDc"/>
    <property type="match status" value="1"/>
</dbReference>
<dbReference type="SMART" id="SM00490">
    <property type="entry name" value="HELICc"/>
    <property type="match status" value="1"/>
</dbReference>
<dbReference type="SUPFAM" id="SSF52540">
    <property type="entry name" value="P-loop containing nucleoside triphosphate hydrolases"/>
    <property type="match status" value="1"/>
</dbReference>
<dbReference type="PROSITE" id="PS51192">
    <property type="entry name" value="HELICASE_ATP_BIND_1"/>
    <property type="match status" value="1"/>
</dbReference>
<dbReference type="PROSITE" id="PS51194">
    <property type="entry name" value="HELICASE_CTER"/>
    <property type="match status" value="1"/>
</dbReference>
<dbReference type="PROSITE" id="PS51195">
    <property type="entry name" value="Q_MOTIF"/>
    <property type="match status" value="1"/>
</dbReference>
<gene>
    <name type="primary">DBP8</name>
    <name type="ORF">SCY_2561</name>
</gene>
<sequence>MADFKSLGLSKWLTESLRAMKITQPTAIQKACIPKILEGRDCIGGAKTGSGKTIAFAGPMLTKWSEDPSGMFGVVLTPTRELAMQIAEQFTALGSSMNIRVSVIVGGESIVQQALDLQRKPHFIIATPGRLAHHIMSSGDDTVGGLMRAKYLVLDEADILLTSTFADHLATCISALPPKDKRQTLLFTATITDQVKSLQNAPVQKGKPPLFAYQVESVDNVAIPSTLKIEYILVPEHVKEAYLYQLLTCEEYENKTAIIFVNRTMTAEILRRTLKQLEVRVASLHSQMPQQERTNSLHRFRANAARILIATDVASRGLDIPTVELVVNYDIPSDPDVFIHRSGRTARAGRIGDAISFVTQRDVSRIQAIEDRINKKMTETNKVHDTAVIRKALTKVTKAKRESLMAMQKENFGERKRQQKKKQNDGKSLRS</sequence>
<proteinExistence type="inferred from homology"/>
<comment type="function">
    <text evidence="1">ATP-binding RNA helicase involved in 40S ribosomal subunit biogenesis and is required for the normal formation of 18S rRNAs through pre-rRNA processing at A0, A1 and A2 sites. Required for vegetative growth (By similarity).</text>
</comment>
<comment type="catalytic activity">
    <reaction>
        <text>ATP + H2O = ADP + phosphate + H(+)</text>
        <dbReference type="Rhea" id="RHEA:13065"/>
        <dbReference type="ChEBI" id="CHEBI:15377"/>
        <dbReference type="ChEBI" id="CHEBI:15378"/>
        <dbReference type="ChEBI" id="CHEBI:30616"/>
        <dbReference type="ChEBI" id="CHEBI:43474"/>
        <dbReference type="ChEBI" id="CHEBI:456216"/>
        <dbReference type="EC" id="3.6.4.13"/>
    </reaction>
</comment>
<comment type="subunit">
    <text evidence="1">Interacts with ESF2.</text>
</comment>
<comment type="subcellular location">
    <subcellularLocation>
        <location evidence="1">Nucleus</location>
        <location evidence="1">Nucleolus</location>
    </subcellularLocation>
</comment>
<comment type="domain">
    <text>The Q motif is unique to and characteristic of the DEAD box family of RNA helicases and controls ATP binding and hydrolysis.</text>
</comment>
<comment type="similarity">
    <text evidence="5">Belongs to the DEAD box helicase family. DDX49/DBP8 subfamily.</text>
</comment>